<keyword id="KW-1185">Reference proteome</keyword>
<keyword id="KW-0687">Ribonucleoprotein</keyword>
<keyword id="KW-0689">Ribosomal protein</keyword>
<keyword id="KW-0694">RNA-binding</keyword>
<keyword id="KW-0699">rRNA-binding</keyword>
<dbReference type="EMBL" id="CP001291">
    <property type="protein sequence ID" value="ACK72113.1"/>
    <property type="molecule type" value="Genomic_DNA"/>
</dbReference>
<dbReference type="RefSeq" id="WP_015955705.1">
    <property type="nucleotide sequence ID" value="NC_011729.1"/>
</dbReference>
<dbReference type="STRING" id="65393.PCC7424_3732"/>
<dbReference type="KEGG" id="cyc:PCC7424_3732"/>
<dbReference type="eggNOG" id="COG0254">
    <property type="taxonomic scope" value="Bacteria"/>
</dbReference>
<dbReference type="HOGENOM" id="CLU_114306_1_2_3"/>
<dbReference type="OrthoDB" id="9803251at2"/>
<dbReference type="Proteomes" id="UP000002384">
    <property type="component" value="Chromosome"/>
</dbReference>
<dbReference type="GO" id="GO:1990904">
    <property type="term" value="C:ribonucleoprotein complex"/>
    <property type="evidence" value="ECO:0007669"/>
    <property type="project" value="UniProtKB-KW"/>
</dbReference>
<dbReference type="GO" id="GO:0005840">
    <property type="term" value="C:ribosome"/>
    <property type="evidence" value="ECO:0007669"/>
    <property type="project" value="UniProtKB-KW"/>
</dbReference>
<dbReference type="GO" id="GO:0019843">
    <property type="term" value="F:rRNA binding"/>
    <property type="evidence" value="ECO:0007669"/>
    <property type="project" value="UniProtKB-KW"/>
</dbReference>
<dbReference type="GO" id="GO:0003735">
    <property type="term" value="F:structural constituent of ribosome"/>
    <property type="evidence" value="ECO:0007669"/>
    <property type="project" value="InterPro"/>
</dbReference>
<dbReference type="GO" id="GO:0006412">
    <property type="term" value="P:translation"/>
    <property type="evidence" value="ECO:0007669"/>
    <property type="project" value="UniProtKB-UniRule"/>
</dbReference>
<dbReference type="Gene3D" id="4.10.830.30">
    <property type="entry name" value="Ribosomal protein L31"/>
    <property type="match status" value="1"/>
</dbReference>
<dbReference type="HAMAP" id="MF_00501">
    <property type="entry name" value="Ribosomal_bL31_1"/>
    <property type="match status" value="1"/>
</dbReference>
<dbReference type="InterPro" id="IPR034704">
    <property type="entry name" value="Ribosomal_bL28/bL31-like_sf"/>
</dbReference>
<dbReference type="InterPro" id="IPR002150">
    <property type="entry name" value="Ribosomal_bL31"/>
</dbReference>
<dbReference type="InterPro" id="IPR027491">
    <property type="entry name" value="Ribosomal_bL31_A"/>
</dbReference>
<dbReference type="InterPro" id="IPR042105">
    <property type="entry name" value="Ribosomal_bL31_sf"/>
</dbReference>
<dbReference type="NCBIfam" id="TIGR00105">
    <property type="entry name" value="L31"/>
    <property type="match status" value="1"/>
</dbReference>
<dbReference type="NCBIfam" id="NF000612">
    <property type="entry name" value="PRK00019.1"/>
    <property type="match status" value="1"/>
</dbReference>
<dbReference type="NCBIfam" id="NF001809">
    <property type="entry name" value="PRK00528.1"/>
    <property type="match status" value="1"/>
</dbReference>
<dbReference type="PANTHER" id="PTHR33280">
    <property type="entry name" value="50S RIBOSOMAL PROTEIN L31, CHLOROPLASTIC"/>
    <property type="match status" value="1"/>
</dbReference>
<dbReference type="PANTHER" id="PTHR33280:SF1">
    <property type="entry name" value="LARGE RIBOSOMAL SUBUNIT PROTEIN BL31C"/>
    <property type="match status" value="1"/>
</dbReference>
<dbReference type="Pfam" id="PF01197">
    <property type="entry name" value="Ribosomal_L31"/>
    <property type="match status" value="1"/>
</dbReference>
<dbReference type="PRINTS" id="PR01249">
    <property type="entry name" value="RIBOSOMALL31"/>
</dbReference>
<dbReference type="SUPFAM" id="SSF143800">
    <property type="entry name" value="L28p-like"/>
    <property type="match status" value="1"/>
</dbReference>
<dbReference type="PROSITE" id="PS01143">
    <property type="entry name" value="RIBOSOMAL_L31"/>
    <property type="match status" value="1"/>
</dbReference>
<sequence length="83" mass="9508">MPKADIHPTWYPEAKVICNGEVVMTVGSTQPEIHVEVWSGNHPFYTGTQKMIDTEGRVDRFLRKYGMIDKNKKKNQASDAKEK</sequence>
<proteinExistence type="inferred from homology"/>
<evidence type="ECO:0000255" key="1">
    <source>
        <dbReference type="HAMAP-Rule" id="MF_00501"/>
    </source>
</evidence>
<evidence type="ECO:0000305" key="2"/>
<feature type="chain" id="PRO_1000126601" description="Large ribosomal subunit protein bL31">
    <location>
        <begin position="1"/>
        <end position="83"/>
    </location>
</feature>
<gene>
    <name evidence="1" type="primary">rpmE</name>
    <name evidence="1" type="synonym">rpl31</name>
    <name type="ordered locus">PCC7424_3732</name>
</gene>
<protein>
    <recommendedName>
        <fullName evidence="1">Large ribosomal subunit protein bL31</fullName>
    </recommendedName>
    <alternativeName>
        <fullName evidence="2">50S ribosomal protein L31</fullName>
    </alternativeName>
</protein>
<organism>
    <name type="scientific">Gloeothece citriformis (strain PCC 7424)</name>
    <name type="common">Cyanothece sp. (strain PCC 7424)</name>
    <dbReference type="NCBI Taxonomy" id="65393"/>
    <lineage>
        <taxon>Bacteria</taxon>
        <taxon>Bacillati</taxon>
        <taxon>Cyanobacteriota</taxon>
        <taxon>Cyanophyceae</taxon>
        <taxon>Oscillatoriophycideae</taxon>
        <taxon>Chroococcales</taxon>
        <taxon>Aphanothecaceae</taxon>
        <taxon>Gloeothece</taxon>
        <taxon>Gloeothece citriformis</taxon>
    </lineage>
</organism>
<reference key="1">
    <citation type="journal article" date="2011" name="MBio">
        <title>Novel metabolic attributes of the genus Cyanothece, comprising a group of unicellular nitrogen-fixing Cyanobacteria.</title>
        <authorList>
            <person name="Bandyopadhyay A."/>
            <person name="Elvitigala T."/>
            <person name="Welsh E."/>
            <person name="Stockel J."/>
            <person name="Liberton M."/>
            <person name="Min H."/>
            <person name="Sherman L.A."/>
            <person name="Pakrasi H.B."/>
        </authorList>
    </citation>
    <scope>NUCLEOTIDE SEQUENCE [LARGE SCALE GENOMIC DNA]</scope>
    <source>
        <strain>PCC 7424</strain>
    </source>
</reference>
<name>RL31_GLOC7</name>
<accession>B7KI16</accession>
<comment type="function">
    <text evidence="1">Binds the 23S rRNA.</text>
</comment>
<comment type="subunit">
    <text evidence="1">Part of the 50S ribosomal subunit.</text>
</comment>
<comment type="similarity">
    <text evidence="1">Belongs to the bacterial ribosomal protein bL31 family. Type A subfamily.</text>
</comment>